<name>MYC_CARAU</name>
<reference key="1">
    <citation type="submission" date="1994-06" db="EMBL/GenBank/DDBJ databases">
        <title>Cloning and sequencing of a c-myc gene from goldfish Carassius autatus.</title>
        <authorList>
            <person name="Zhang H."/>
            <person name="Zhang H."/>
            <person name="Okamoto N."/>
            <person name="Ikeda Y."/>
        </authorList>
    </citation>
    <scope>NUCLEOTIDE SEQUENCE [GENOMIC DNA]</scope>
</reference>
<accession>P49709</accession>
<protein>
    <recommendedName>
        <fullName>Transcriptional regulator Myc</fullName>
        <shortName>c-Myc</shortName>
    </recommendedName>
</protein>
<gene>
    <name type="primary">myc</name>
</gene>
<keyword id="KW-0010">Activator</keyword>
<keyword id="KW-0238">DNA-binding</keyword>
<keyword id="KW-0325">Glycoprotein</keyword>
<keyword id="KW-0539">Nucleus</keyword>
<keyword id="KW-1185">Reference proteome</keyword>
<keyword id="KW-0804">Transcription</keyword>
<keyword id="KW-0805">Transcription regulation</keyword>
<dbReference type="EMBL" id="D31729">
    <property type="protein sequence ID" value="BAA06527.1"/>
    <property type="molecule type" value="Genomic_DNA"/>
</dbReference>
<dbReference type="SMR" id="P49709"/>
<dbReference type="GlyCosmos" id="P49709">
    <property type="glycosylation" value="1 site, No reported glycans"/>
</dbReference>
<dbReference type="OrthoDB" id="5964374at2759"/>
<dbReference type="Proteomes" id="UP000515129">
    <property type="component" value="Unplaced"/>
</dbReference>
<dbReference type="GO" id="GO:0005634">
    <property type="term" value="C:nucleus"/>
    <property type="evidence" value="ECO:0007669"/>
    <property type="project" value="UniProtKB-SubCell"/>
</dbReference>
<dbReference type="GO" id="GO:0003677">
    <property type="term" value="F:DNA binding"/>
    <property type="evidence" value="ECO:0007669"/>
    <property type="project" value="UniProtKB-KW"/>
</dbReference>
<dbReference type="GO" id="GO:0000981">
    <property type="term" value="F:DNA-binding transcription factor activity, RNA polymerase II-specific"/>
    <property type="evidence" value="ECO:0000250"/>
    <property type="project" value="UniProtKB"/>
</dbReference>
<dbReference type="GO" id="GO:0046983">
    <property type="term" value="F:protein dimerization activity"/>
    <property type="evidence" value="ECO:0007669"/>
    <property type="project" value="InterPro"/>
</dbReference>
<dbReference type="CDD" id="cd11458">
    <property type="entry name" value="bHLHzip_c-Myc"/>
    <property type="match status" value="1"/>
</dbReference>
<dbReference type="FunFam" id="4.10.280.10:FF:000019">
    <property type="entry name" value="Myc proto-oncogene protein"/>
    <property type="match status" value="1"/>
</dbReference>
<dbReference type="Gene3D" id="4.10.280.10">
    <property type="entry name" value="Helix-loop-helix DNA-binding domain"/>
    <property type="match status" value="1"/>
</dbReference>
<dbReference type="InterPro" id="IPR011598">
    <property type="entry name" value="bHLH_dom"/>
</dbReference>
<dbReference type="InterPro" id="IPR036638">
    <property type="entry name" value="HLH_DNA-bd_sf"/>
</dbReference>
<dbReference type="InterPro" id="IPR003327">
    <property type="entry name" value="Myc-LZ"/>
</dbReference>
<dbReference type="InterPro" id="IPR050433">
    <property type="entry name" value="Myc_transcription_factors"/>
</dbReference>
<dbReference type="InterPro" id="IPR002418">
    <property type="entry name" value="Tscrpt_reg_Myc"/>
</dbReference>
<dbReference type="InterPro" id="IPR012682">
    <property type="entry name" value="Tscrpt_reg_Myc_N"/>
</dbReference>
<dbReference type="PANTHER" id="PTHR45851">
    <property type="entry name" value="MYC PROTO-ONCOGENE"/>
    <property type="match status" value="1"/>
</dbReference>
<dbReference type="Pfam" id="PF00010">
    <property type="entry name" value="HLH"/>
    <property type="match status" value="1"/>
</dbReference>
<dbReference type="Pfam" id="PF02344">
    <property type="entry name" value="Myc-LZ"/>
    <property type="match status" value="1"/>
</dbReference>
<dbReference type="Pfam" id="PF01056">
    <property type="entry name" value="Myc_N"/>
    <property type="match status" value="1"/>
</dbReference>
<dbReference type="PIRSF" id="PIRSF001705">
    <property type="entry name" value="Myc_protein"/>
    <property type="match status" value="1"/>
</dbReference>
<dbReference type="PRINTS" id="PR00044">
    <property type="entry name" value="LEUZIPPRMYC"/>
</dbReference>
<dbReference type="SMART" id="SM00353">
    <property type="entry name" value="HLH"/>
    <property type="match status" value="1"/>
</dbReference>
<dbReference type="SUPFAM" id="SSF47459">
    <property type="entry name" value="HLH, helix-loop-helix DNA-binding domain"/>
    <property type="match status" value="1"/>
</dbReference>
<dbReference type="PROSITE" id="PS50888">
    <property type="entry name" value="BHLH"/>
    <property type="match status" value="1"/>
</dbReference>
<organism>
    <name type="scientific">Carassius auratus</name>
    <name type="common">Goldfish</name>
    <dbReference type="NCBI Taxonomy" id="7957"/>
    <lineage>
        <taxon>Eukaryota</taxon>
        <taxon>Metazoa</taxon>
        <taxon>Chordata</taxon>
        <taxon>Craniata</taxon>
        <taxon>Vertebrata</taxon>
        <taxon>Euteleostomi</taxon>
        <taxon>Actinopterygii</taxon>
        <taxon>Neopterygii</taxon>
        <taxon>Teleostei</taxon>
        <taxon>Ostariophysi</taxon>
        <taxon>Cypriniformes</taxon>
        <taxon>Cyprinidae</taxon>
        <taxon>Cyprininae</taxon>
        <taxon>Carassius</taxon>
    </lineage>
</organism>
<proteinExistence type="inferred from homology"/>
<feature type="chain" id="PRO_0000127315" description="Transcriptional regulator Myc">
    <location>
        <begin position="1"/>
        <end position="399"/>
    </location>
</feature>
<feature type="domain" description="bHLH" evidence="3">
    <location>
        <begin position="315"/>
        <end position="367"/>
    </location>
</feature>
<feature type="region of interest" description="Disordered" evidence="4">
    <location>
        <begin position="177"/>
        <end position="254"/>
    </location>
</feature>
<feature type="region of interest" description="Disordered" evidence="4">
    <location>
        <begin position="289"/>
        <end position="320"/>
    </location>
</feature>
<feature type="region of interest" description="Leucine-zipper">
    <location>
        <begin position="374"/>
        <end position="395"/>
    </location>
</feature>
<feature type="short sequence motif" description="9aaTAD" evidence="2">
    <location>
        <begin position="76"/>
        <end position="84"/>
    </location>
</feature>
<feature type="compositionally biased region" description="Acidic residues" evidence="4">
    <location>
        <begin position="205"/>
        <end position="233"/>
    </location>
</feature>
<feature type="compositionally biased region" description="Basic and acidic residues" evidence="4">
    <location>
        <begin position="236"/>
        <end position="250"/>
    </location>
</feature>
<feature type="glycosylation site" description="O-linked (GlcNAc) threonine" evidence="1">
    <location>
        <position position="58"/>
    </location>
</feature>
<evidence type="ECO:0000250" key="1"/>
<evidence type="ECO:0000250" key="2">
    <source>
        <dbReference type="UniProtKB" id="P01106"/>
    </source>
</evidence>
<evidence type="ECO:0000255" key="3">
    <source>
        <dbReference type="PROSITE-ProRule" id="PRU00981"/>
    </source>
</evidence>
<evidence type="ECO:0000256" key="4">
    <source>
        <dbReference type="SAM" id="MobiDB-lite"/>
    </source>
</evidence>
<comment type="function">
    <text evidence="2">Transcription factor that binds DNA in a non-specific manner, yet also specifically recognizes the core sequence 5'-CAC[GA]TG-3'. Activates the transcription of growth-related genes.</text>
</comment>
<comment type="subunit">
    <text>Efficient DNA binding requires dimerization with another bHLH protein. Binds DNA as a heterodimer with MAX.</text>
</comment>
<comment type="subcellular location">
    <subcellularLocation>
        <location>Nucleus</location>
    </subcellularLocation>
</comment>
<comment type="domain">
    <text evidence="2">The 9aaTAD motif is a transactivation domain present in a large number of yeast and animal transcription factors.</text>
</comment>
<sequence length="399" mass="45756">MPVSASLAYKNYDYDYDSIQPYFYFDNDDEDFYHHQQGQPQPPAPSEDIWKKFELLPTPPLSPSRRQSLSTAEQLEMVSEFLGDDVVNQSFICDADYSQSFIKSIIIQDCMWSGFSAAAKLEKAVSERLASLHAARKELISDSSSNRLSASYLQDLSTSASECIDPSVVFPYPLTESSKSNKVAPSQPMLVLDTPPNSSSSSGSDSEDEEEEEEEEEEEEEEEEEEEEEEEIDVVTVEKRQKRNEADVSDSRYPSPLVLKRCHVSTHQHNYAAHPSTRHDQPAVKRLRLETSSSNRHGKQRKCTSPRTSDSEDNDKRRTHNVLERQRRNELKLSFFALRDEIPEVANNEKAAKVVILKKATECIHSMQLDEQRLLSIKEQLRRKSEQLKHRLQQLRSSH</sequence>